<comment type="catalytic activity">
    <reaction evidence="1">
        <text>urea + 2 H2O + H(+) = hydrogencarbonate + 2 NH4(+)</text>
        <dbReference type="Rhea" id="RHEA:20557"/>
        <dbReference type="ChEBI" id="CHEBI:15377"/>
        <dbReference type="ChEBI" id="CHEBI:15378"/>
        <dbReference type="ChEBI" id="CHEBI:16199"/>
        <dbReference type="ChEBI" id="CHEBI:17544"/>
        <dbReference type="ChEBI" id="CHEBI:28938"/>
        <dbReference type="EC" id="3.5.1.5"/>
    </reaction>
</comment>
<comment type="cofactor">
    <cofactor evidence="1">
        <name>Ni cation</name>
        <dbReference type="ChEBI" id="CHEBI:25516"/>
    </cofactor>
    <text evidence="1">Binds 2 nickel ions per subunit.</text>
</comment>
<comment type="pathway">
    <text evidence="1">Nitrogen metabolism; urea degradation; CO(2) and NH(3) from urea (urease route): step 1/1.</text>
</comment>
<comment type="subunit">
    <text evidence="1">Heterotrimer of UreA (gamma), UreB (beta) and UreC (alpha) subunits. Three heterotrimers associate to form the active enzyme.</text>
</comment>
<comment type="subcellular location">
    <subcellularLocation>
        <location evidence="1">Cytoplasm</location>
    </subcellularLocation>
</comment>
<comment type="PTM">
    <text evidence="1">Carboxylation allows a single lysine to coordinate two nickel ions.</text>
</comment>
<comment type="similarity">
    <text evidence="1">Belongs to the metallo-dependent hydrolases superfamily. Urease alpha subunit family.</text>
</comment>
<dbReference type="EC" id="3.5.1.5" evidence="1"/>
<dbReference type="EMBL" id="CP001150">
    <property type="protein sequence ID" value="ACM01493.1"/>
    <property type="molecule type" value="Genomic_DNA"/>
</dbReference>
<dbReference type="RefSeq" id="WP_015920870.1">
    <property type="nucleotide sequence ID" value="NC_011963.1"/>
</dbReference>
<dbReference type="SMR" id="B9KK46"/>
<dbReference type="MEROPS" id="M38.982"/>
<dbReference type="GeneID" id="67447040"/>
<dbReference type="KEGG" id="rsk:RSKD131_1633"/>
<dbReference type="HOGENOM" id="CLU_000980_0_0_5"/>
<dbReference type="UniPathway" id="UPA00258">
    <property type="reaction ID" value="UER00370"/>
</dbReference>
<dbReference type="GO" id="GO:0005737">
    <property type="term" value="C:cytoplasm"/>
    <property type="evidence" value="ECO:0007669"/>
    <property type="project" value="UniProtKB-SubCell"/>
</dbReference>
<dbReference type="GO" id="GO:0016151">
    <property type="term" value="F:nickel cation binding"/>
    <property type="evidence" value="ECO:0007669"/>
    <property type="project" value="UniProtKB-UniRule"/>
</dbReference>
<dbReference type="GO" id="GO:0009039">
    <property type="term" value="F:urease activity"/>
    <property type="evidence" value="ECO:0007669"/>
    <property type="project" value="UniProtKB-UniRule"/>
</dbReference>
<dbReference type="GO" id="GO:0043419">
    <property type="term" value="P:urea catabolic process"/>
    <property type="evidence" value="ECO:0007669"/>
    <property type="project" value="UniProtKB-UniRule"/>
</dbReference>
<dbReference type="CDD" id="cd00375">
    <property type="entry name" value="Urease_alpha"/>
    <property type="match status" value="1"/>
</dbReference>
<dbReference type="Gene3D" id="3.20.20.140">
    <property type="entry name" value="Metal-dependent hydrolases"/>
    <property type="match status" value="1"/>
</dbReference>
<dbReference type="Gene3D" id="2.30.40.10">
    <property type="entry name" value="Urease, subunit C, domain 1"/>
    <property type="match status" value="1"/>
</dbReference>
<dbReference type="HAMAP" id="MF_01953">
    <property type="entry name" value="Urease_alpha"/>
    <property type="match status" value="1"/>
</dbReference>
<dbReference type="InterPro" id="IPR006680">
    <property type="entry name" value="Amidohydro-rel"/>
</dbReference>
<dbReference type="InterPro" id="IPR011059">
    <property type="entry name" value="Metal-dep_hydrolase_composite"/>
</dbReference>
<dbReference type="InterPro" id="IPR032466">
    <property type="entry name" value="Metal_Hydrolase"/>
</dbReference>
<dbReference type="InterPro" id="IPR011612">
    <property type="entry name" value="Urease_alpha_N_dom"/>
</dbReference>
<dbReference type="InterPro" id="IPR050112">
    <property type="entry name" value="Urease_alpha_subunit"/>
</dbReference>
<dbReference type="InterPro" id="IPR017950">
    <property type="entry name" value="Urease_AS"/>
</dbReference>
<dbReference type="InterPro" id="IPR005848">
    <property type="entry name" value="Urease_asu"/>
</dbReference>
<dbReference type="InterPro" id="IPR017951">
    <property type="entry name" value="Urease_asu_c"/>
</dbReference>
<dbReference type="InterPro" id="IPR029754">
    <property type="entry name" value="Urease_Ni-bd"/>
</dbReference>
<dbReference type="NCBIfam" id="NF009685">
    <property type="entry name" value="PRK13206.1"/>
    <property type="match status" value="1"/>
</dbReference>
<dbReference type="NCBIfam" id="NF009686">
    <property type="entry name" value="PRK13207.1"/>
    <property type="match status" value="1"/>
</dbReference>
<dbReference type="NCBIfam" id="TIGR01792">
    <property type="entry name" value="urease_alph"/>
    <property type="match status" value="1"/>
</dbReference>
<dbReference type="PANTHER" id="PTHR43440">
    <property type="entry name" value="UREASE"/>
    <property type="match status" value="1"/>
</dbReference>
<dbReference type="PANTHER" id="PTHR43440:SF1">
    <property type="entry name" value="UREASE"/>
    <property type="match status" value="1"/>
</dbReference>
<dbReference type="Pfam" id="PF01979">
    <property type="entry name" value="Amidohydro_1"/>
    <property type="match status" value="1"/>
</dbReference>
<dbReference type="Pfam" id="PF00449">
    <property type="entry name" value="Urease_alpha"/>
    <property type="match status" value="1"/>
</dbReference>
<dbReference type="PRINTS" id="PR01752">
    <property type="entry name" value="UREASE"/>
</dbReference>
<dbReference type="SUPFAM" id="SSF51338">
    <property type="entry name" value="Composite domain of metallo-dependent hydrolases"/>
    <property type="match status" value="1"/>
</dbReference>
<dbReference type="SUPFAM" id="SSF51556">
    <property type="entry name" value="Metallo-dependent hydrolases"/>
    <property type="match status" value="1"/>
</dbReference>
<dbReference type="PROSITE" id="PS01120">
    <property type="entry name" value="UREASE_1"/>
    <property type="match status" value="1"/>
</dbReference>
<dbReference type="PROSITE" id="PS00145">
    <property type="entry name" value="UREASE_2"/>
    <property type="match status" value="1"/>
</dbReference>
<dbReference type="PROSITE" id="PS51368">
    <property type="entry name" value="UREASE_3"/>
    <property type="match status" value="1"/>
</dbReference>
<evidence type="ECO:0000255" key="1">
    <source>
        <dbReference type="HAMAP-Rule" id="MF_01953"/>
    </source>
</evidence>
<proteinExistence type="inferred from homology"/>
<protein>
    <recommendedName>
        <fullName evidence="1">Urease subunit alpha</fullName>
        <ecNumber evidence="1">3.5.1.5</ecNumber>
    </recommendedName>
    <alternativeName>
        <fullName evidence="1">Urea amidohydrolase subunit alpha</fullName>
    </alternativeName>
</protein>
<feature type="chain" id="PRO_1000188894" description="Urease subunit alpha">
    <location>
        <begin position="1"/>
        <end position="568"/>
    </location>
</feature>
<feature type="domain" description="Urease" evidence="1">
    <location>
        <begin position="131"/>
        <end position="568"/>
    </location>
</feature>
<feature type="active site" description="Proton donor" evidence="1">
    <location>
        <position position="322"/>
    </location>
</feature>
<feature type="binding site" evidence="1">
    <location>
        <position position="136"/>
    </location>
    <ligand>
        <name>Ni(2+)</name>
        <dbReference type="ChEBI" id="CHEBI:49786"/>
        <label>1</label>
    </ligand>
</feature>
<feature type="binding site" evidence="1">
    <location>
        <position position="138"/>
    </location>
    <ligand>
        <name>Ni(2+)</name>
        <dbReference type="ChEBI" id="CHEBI:49786"/>
        <label>1</label>
    </ligand>
</feature>
<feature type="binding site" description="via carbamate group" evidence="1">
    <location>
        <position position="219"/>
    </location>
    <ligand>
        <name>Ni(2+)</name>
        <dbReference type="ChEBI" id="CHEBI:49786"/>
        <label>1</label>
    </ligand>
</feature>
<feature type="binding site" description="via carbamate group" evidence="1">
    <location>
        <position position="219"/>
    </location>
    <ligand>
        <name>Ni(2+)</name>
        <dbReference type="ChEBI" id="CHEBI:49786"/>
        <label>2</label>
    </ligand>
</feature>
<feature type="binding site" evidence="1">
    <location>
        <position position="221"/>
    </location>
    <ligand>
        <name>substrate</name>
    </ligand>
</feature>
<feature type="binding site" evidence="1">
    <location>
        <position position="248"/>
    </location>
    <ligand>
        <name>Ni(2+)</name>
        <dbReference type="ChEBI" id="CHEBI:49786"/>
        <label>2</label>
    </ligand>
</feature>
<feature type="binding site" evidence="1">
    <location>
        <position position="274"/>
    </location>
    <ligand>
        <name>Ni(2+)</name>
        <dbReference type="ChEBI" id="CHEBI:49786"/>
        <label>2</label>
    </ligand>
</feature>
<feature type="binding site" evidence="1">
    <location>
        <position position="362"/>
    </location>
    <ligand>
        <name>Ni(2+)</name>
        <dbReference type="ChEBI" id="CHEBI:49786"/>
        <label>1</label>
    </ligand>
</feature>
<feature type="modified residue" description="N6-carboxylysine" evidence="1">
    <location>
        <position position="219"/>
    </location>
</feature>
<reference key="1">
    <citation type="journal article" date="2009" name="J. Bacteriol.">
        <title>Complete genome sequence of Rhodobacter sphaeroides KD131.</title>
        <authorList>
            <person name="Lim S.-K."/>
            <person name="Kim S.J."/>
            <person name="Cha S.H."/>
            <person name="Oh Y.-K."/>
            <person name="Rhee H.-J."/>
            <person name="Kim M.-S."/>
            <person name="Lee J.K."/>
        </authorList>
    </citation>
    <scope>NUCLEOTIDE SEQUENCE [LARGE SCALE GENOMIC DNA]</scope>
    <source>
        <strain>KD131 / KCTC 12085</strain>
    </source>
</reference>
<sequence length="568" mass="60622">MPASISRSTYASMFGPTTGDRLRLGDTELVIEVERDLTTYGEEVKFGGGKVIRDGMGQSQRTRAEGAMDTVITNALIVDWTGIYKADVGLRDGRIAKIGKAGNPDTQPGVDIVIGPGTEIIAGEGRILTAGGMDAHIHFICPQQIEDSLHSGITTMLGGGTGPAHGTLATTCTPGPWHIGRMLQAADAFPINLAFAGKGNASLPAGLEEQVRAGASCLKLHEDWGTTPAAIDCCLSVADRMDVQVMIHTDTLNESGFVENTLAAIGGRTIHAFHTEGAGGGHAPDIIKVVGAANVIPSSTNPTMPYTANTVEEHLDMLMVCHHLDRSIPEDVAFAESRIRKETIAAEDILHDMGAFSVISSDSQAMGRVGEVITRTWQTAHKMKVQRGRLAEETGANDNQRVRRYIAKYTINPAIAHGLSRHIGSVEEGKRADLVLWQPAFFGAKPDLVLLGGMIVCAQMGDPNGSIPAQPYYSRPMFGAFGGALHASAVTFVSQAAAEDGVGERLRLQKGTLAVEGTRDIGKADMKLNVHRPSIEVNPETYEVRADGELLTCQPLAELPLAQRYFLY</sequence>
<gene>
    <name evidence="1" type="primary">ureC</name>
    <name type="ordered locus">RSKD131_1633</name>
</gene>
<organism>
    <name type="scientific">Cereibacter sphaeroides (strain KD131 / KCTC 12085)</name>
    <name type="common">Rhodobacter sphaeroides</name>
    <dbReference type="NCBI Taxonomy" id="557760"/>
    <lineage>
        <taxon>Bacteria</taxon>
        <taxon>Pseudomonadati</taxon>
        <taxon>Pseudomonadota</taxon>
        <taxon>Alphaproteobacteria</taxon>
        <taxon>Rhodobacterales</taxon>
        <taxon>Paracoccaceae</taxon>
        <taxon>Cereibacter</taxon>
    </lineage>
</organism>
<name>URE1_CERSK</name>
<keyword id="KW-0963">Cytoplasm</keyword>
<keyword id="KW-0378">Hydrolase</keyword>
<keyword id="KW-0479">Metal-binding</keyword>
<keyword id="KW-0533">Nickel</keyword>
<accession>B9KK46</accession>